<gene>
    <name evidence="20" type="primary">Hip1</name>
    <name evidence="18" type="synonym">Kiaa4113</name>
</gene>
<protein>
    <recommendedName>
        <fullName evidence="2">Huntingtin-interacting protein 1</fullName>
        <shortName>HIP-1</shortName>
    </recommendedName>
    <alternativeName>
        <fullName>Huntingtin-interacting protein I</fullName>
        <shortName evidence="2">HIP-I</shortName>
    </alternativeName>
</protein>
<sequence>MDRMASSMKQVSNPLPKVLSRRGVGAGMEAAERESFERTQTVSVNKAINTQEVAVKEKHARTCILGTHHEKGAQTFWSVVNRLPLSSNAMLCWKFCHVFHKLLRDGHPNVLKDSLRYKNELSDMSRMWGHLSEGYGQLCSIYLKLLRTRMEYHTKNPRFPGNLQMSDRQLDEAGESDVNNFFQLTVEMFDYLECELNLFQTVFNSLDMSRSVSVTTAGQCRLAPLIQVILDCSHLYDYTVKLLFKLHSCLPADTLQGHRDRFMEQFTKLKDLFQRSSNLQYFKRLIQIPQLPENPPNFLRASALSEHISPVVVIPAEVSSPDSEPVLEKDDLMDMDASQQTLFDNKFDDVFGSSLSSDPFNFNNQNGVNKDEKDHLIERLYREISGLTGQLDNMKIESQRAMLQLKGRVSELEAELAEQQHLGRQAMDDCEFLRTELDELKRQREDTEKAQRSLTEIERKAQANEQRYSKLKEKYSELVQNHADLLRKNAEVTKQVSVARQAQVDLEREKKELADSFARTQEQQDVLENLKHELATSRQELQVLHSNLETSAQSEAKWLTQIAELEKEQGSLATVAAQREEELSALRDQLESTQIKLAGAQESMCQQVKDQRKTLLAGIRKAAEREIQEALSQLEEPTLISCAGSTDHLLSKVSSVSSCLEQLEKNGSQYLACPEDISELLHSITLLAHLTGDTIIQGSATSLRAPPEPADSLTEACRQYGRETLAYLSSLEEEGTMENADVTALRNCLSRVKTLGEELLPRGLDIKQEELGDLVDKEMAATSAAIEAATTRIEEILSKSRAGDTGVKLEVNERILGSCTSLMQAIKVLVVASKDLQKEIVESGRGTASPKEFYAKNSRWTEGLISASKAVGWGATIMVDAADLVVQGKGKFEELMVCSREIAASTAQLVAASKVKANKGSLNLTQLQQASRGVNQATAAVVASTISGKSQIEETDSMDFSSMTLTQIKRQEMDSQVRVLELENDLQKERQKLGELRKKHYELAGVAEGWEEGTEASPSTVQEAIPDKE</sequence>
<accession>Q8VD75</accession>
<accession>Q3TLS2</accession>
<accession>Q571K7</accession>
<comment type="function">
    <text evidence="2 7 8 9 10 11 12">Plays a role in clathrin-mediated endocytosis and trafficking (PubMed:11577110). Involved in regulating AMPA receptor trafficking in the central nervous system in an NMDA-dependent manner (PubMed:12839988, PubMed:17329427). Regulates presynaptic nerve terminal activity (PubMed:17928447). Enhances androgen receptor (AR)-mediated transcription (By similarity). May act as a proapoptotic protein that induces cell death by acting through the intrinsic apoptosis pathway (By similarity). Binds 3-phosphoinositides (via ENTH domain) (By similarity). May act through the ENTH domain to promote cell survival by stabilizing receptor tyrosine kinases following ligand-induced endocytosis (By similarity). May play a functional role in the cell filament networks (By similarity). May be required for differentiation, proliferation, and/or survival of somatic and germline progenitors (PubMed:11604514, PubMed:14998932, PubMed:16967501, PubMed:17928447).</text>
</comment>
<comment type="subunit">
    <text evidence="1 9 12">Homodimer. Binds actin. Binds HTT (via N-terminus). This interaction is restricted to the brain. Binds to IFT57. In normal conditions, it poorly interacts with IFT57, HIP1 being strongly associated with HTT. However, in mutant HTT proteins with a long poly-Gln region, interaction between HTT and HIP1 is inhibited, promoting the interaction between HIP1 and IFT57. Interacts with CLTB (via N-terminus). Interacts (via coiled coil domain) with AR. Interacts with AP2A1, AP2A2, CLTC and HIP1R (By similarity). Interacts with GRIA1, GRIN2A and GRIN2B.</text>
</comment>
<comment type="subcellular location">
    <subcellularLocation>
        <location evidence="1">Cytoplasm</location>
    </subcellularLocation>
    <subcellularLocation>
        <location evidence="1">Nucleus</location>
    </subcellularLocation>
    <subcellularLocation>
        <location evidence="1">Endomembrane system</location>
    </subcellularLocation>
    <subcellularLocation>
        <location evidence="1">Cytoplasmic vesicle</location>
        <location evidence="1">Clathrin-coated vesicle membrane</location>
    </subcellularLocation>
    <text evidence="1">Shuttles between cytoplasm and nucleus. Nuclear translocation can be induced by AR (By similarity).</text>
</comment>
<comment type="tissue specificity">
    <text evidence="8 9 10 11 15">Most abundantly expressed in brain. In brain, expressed in cortical tissue, hippocampus, the molecular layer of the cerebellum and olfactory bulb. Also expressed in spinal cord and bone marrow (at protein level). Expressed in reproductive tissues.</text>
</comment>
<comment type="domain">
    <text evidence="2">The pseudo DED region (pDED) mediates the interaction with IFT57.</text>
</comment>
<comment type="domain">
    <text evidence="1">Binds F-actin via the talin-like I/LWEQ domain.</text>
</comment>
<comment type="disruption phenotype">
    <text evidence="8 9 10 11 13 14">Mice develop a neurological phenotype by 3 months of age, characterized by wasting, tremor and a gait ataxia secondary to a rigid thoracolumbar kyphosis (PubMed:12839988, PubMed:14998932). Recovery of synaptic transmission following synaptic depression induced by prolonged nerve stimulation is reduced (PubMed:17928447). Paired-pulse facilitation, a form of neuronal plasticity in which delivery of two stimuli within a second of each other produces an increase in the size of the second synaptic response, is enhanced (PubMed:17928447). They also display micro-ophthalmia with nuclear cataracts (PubMed:14998932). Mutant male mice are mostly infertile and exhibit testicular degeneration with increased apoptosis of postmeiotic spermatids (PubMed:11604514, PubMed:16967501). Hip1 and Hip1r double-knockout mice are dwarfed, afflicted with severe vertebral defects and die in early adulthood (PubMed:17452370).</text>
</comment>
<comment type="similarity">
    <text evidence="3">Belongs to the SLA2 family.</text>
</comment>
<comment type="sequence caution" evidence="16">
    <conflict type="erroneous initiation">
        <sequence resource="EMBL-CDS" id="AAH17516"/>
    </conflict>
</comment>
<name>HIP1_MOUSE</name>
<feature type="chain" id="PRO_0000361654" description="Huntingtin-interacting protein 1">
    <location>
        <begin position="1"/>
        <end position="1029"/>
    </location>
</feature>
<feature type="domain" description="ENTH" evidence="4">
    <location>
        <begin position="32"/>
        <end position="160"/>
    </location>
</feature>
<feature type="domain" description="I/LWEQ" evidence="5">
    <location>
        <begin position="763"/>
        <end position="1004"/>
    </location>
</feature>
<feature type="region of interest" description="pDED">
    <location>
        <begin position="410"/>
        <end position="491"/>
    </location>
</feature>
<feature type="region of interest" description="Important for actin binding" evidence="1">
    <location>
        <begin position="859"/>
        <end position="916"/>
    </location>
</feature>
<feature type="region of interest" description="Disordered" evidence="6">
    <location>
        <begin position="1009"/>
        <end position="1029"/>
    </location>
</feature>
<feature type="coiled-coil region" evidence="3">
    <location>
        <begin position="375"/>
        <end position="636"/>
    </location>
</feature>
<feature type="modified residue" description="Phosphoserine" evidence="2">
    <location>
        <position position="338"/>
    </location>
</feature>
<feature type="sequence conflict" description="In Ref. 2; BAE38720." evidence="16" ref="2">
    <original>M</original>
    <variation>V</variation>
    <location>
        <position position="402"/>
    </location>
</feature>
<feature type="sequence conflict" description="In Ref. 2; BAE38720." evidence="16" ref="2">
    <original>M</original>
    <variation>T</variation>
    <location>
        <position position="427"/>
    </location>
</feature>
<evidence type="ECO:0000250" key="1"/>
<evidence type="ECO:0000250" key="2">
    <source>
        <dbReference type="UniProtKB" id="O00291"/>
    </source>
</evidence>
<evidence type="ECO:0000255" key="3"/>
<evidence type="ECO:0000255" key="4">
    <source>
        <dbReference type="PROSITE-ProRule" id="PRU00243"/>
    </source>
</evidence>
<evidence type="ECO:0000255" key="5">
    <source>
        <dbReference type="PROSITE-ProRule" id="PRU00292"/>
    </source>
</evidence>
<evidence type="ECO:0000256" key="6">
    <source>
        <dbReference type="SAM" id="MobiDB-lite"/>
    </source>
</evidence>
<evidence type="ECO:0000269" key="7">
    <source>
    </source>
</evidence>
<evidence type="ECO:0000269" key="8">
    <source>
    </source>
</evidence>
<evidence type="ECO:0000269" key="9">
    <source>
    </source>
</evidence>
<evidence type="ECO:0000269" key="10">
    <source>
    </source>
</evidence>
<evidence type="ECO:0000269" key="11">
    <source>
    </source>
</evidence>
<evidence type="ECO:0000269" key="12">
    <source>
    </source>
</evidence>
<evidence type="ECO:0000269" key="13">
    <source>
    </source>
</evidence>
<evidence type="ECO:0000269" key="14">
    <source>
    </source>
</evidence>
<evidence type="ECO:0000269" key="15">
    <source>
    </source>
</evidence>
<evidence type="ECO:0000305" key="16"/>
<evidence type="ECO:0000312" key="17">
    <source>
        <dbReference type="EMBL" id="AAH17516.1"/>
    </source>
</evidence>
<evidence type="ECO:0000312" key="18">
    <source>
        <dbReference type="EMBL" id="BAD90367.1"/>
    </source>
</evidence>
<evidence type="ECO:0000312" key="19">
    <source>
        <dbReference type="EMBL" id="BAE38720.1"/>
    </source>
</evidence>
<evidence type="ECO:0000312" key="20">
    <source>
        <dbReference type="MGI" id="MGI:1099804"/>
    </source>
</evidence>
<proteinExistence type="evidence at protein level"/>
<keyword id="KW-0009">Actin-binding</keyword>
<keyword id="KW-0010">Activator</keyword>
<keyword id="KW-0053">Apoptosis</keyword>
<keyword id="KW-0175">Coiled coil</keyword>
<keyword id="KW-0963">Cytoplasm</keyword>
<keyword id="KW-0968">Cytoplasmic vesicle</keyword>
<keyword id="KW-0221">Differentiation</keyword>
<keyword id="KW-0254">Endocytosis</keyword>
<keyword id="KW-0472">Membrane</keyword>
<keyword id="KW-0523">Neurodegeneration</keyword>
<keyword id="KW-0539">Nucleus</keyword>
<keyword id="KW-0597">Phosphoprotein</keyword>
<keyword id="KW-1185">Reference proteome</keyword>
<keyword id="KW-0804">Transcription</keyword>
<keyword id="KW-0805">Transcription regulation</keyword>
<organism>
    <name type="scientific">Mus musculus</name>
    <name type="common">Mouse</name>
    <dbReference type="NCBI Taxonomy" id="10090"/>
    <lineage>
        <taxon>Eukaryota</taxon>
        <taxon>Metazoa</taxon>
        <taxon>Chordata</taxon>
        <taxon>Craniata</taxon>
        <taxon>Vertebrata</taxon>
        <taxon>Euteleostomi</taxon>
        <taxon>Mammalia</taxon>
        <taxon>Eutheria</taxon>
        <taxon>Euarchontoglires</taxon>
        <taxon>Glires</taxon>
        <taxon>Rodentia</taxon>
        <taxon>Myomorpha</taxon>
        <taxon>Muroidea</taxon>
        <taxon>Muridae</taxon>
        <taxon>Murinae</taxon>
        <taxon>Mus</taxon>
        <taxon>Mus</taxon>
    </lineage>
</organism>
<reference evidence="17" key="1">
    <citation type="journal article" date="2004" name="Genome Res.">
        <title>The status, quality, and expansion of the NIH full-length cDNA project: the Mammalian Gene Collection (MGC).</title>
        <authorList>
            <consortium name="The MGC Project Team"/>
        </authorList>
    </citation>
    <scope>NUCLEOTIDE SEQUENCE [LARGE SCALE MRNA]</scope>
    <source>
        <strain evidence="17">C57BL/6J</strain>
        <tissue evidence="17">Retina</tissue>
    </source>
</reference>
<reference evidence="16 19" key="2">
    <citation type="journal article" date="2005" name="Science">
        <title>The transcriptional landscape of the mammalian genome.</title>
        <authorList>
            <person name="Carninci P."/>
            <person name="Kasukawa T."/>
            <person name="Katayama S."/>
            <person name="Gough J."/>
            <person name="Frith M.C."/>
            <person name="Maeda N."/>
            <person name="Oyama R."/>
            <person name="Ravasi T."/>
            <person name="Lenhard B."/>
            <person name="Wells C."/>
            <person name="Kodzius R."/>
            <person name="Shimokawa K."/>
            <person name="Bajic V.B."/>
            <person name="Brenner S.E."/>
            <person name="Batalov S."/>
            <person name="Forrest A.R."/>
            <person name="Zavolan M."/>
            <person name="Davis M.J."/>
            <person name="Wilming L.G."/>
            <person name="Aidinis V."/>
            <person name="Allen J.E."/>
            <person name="Ambesi-Impiombato A."/>
            <person name="Apweiler R."/>
            <person name="Aturaliya R.N."/>
            <person name="Bailey T.L."/>
            <person name="Bansal M."/>
            <person name="Baxter L."/>
            <person name="Beisel K.W."/>
            <person name="Bersano T."/>
            <person name="Bono H."/>
            <person name="Chalk A.M."/>
            <person name="Chiu K.P."/>
            <person name="Choudhary V."/>
            <person name="Christoffels A."/>
            <person name="Clutterbuck D.R."/>
            <person name="Crowe M.L."/>
            <person name="Dalla E."/>
            <person name="Dalrymple B.P."/>
            <person name="de Bono B."/>
            <person name="Della Gatta G."/>
            <person name="di Bernardo D."/>
            <person name="Down T."/>
            <person name="Engstrom P."/>
            <person name="Fagiolini M."/>
            <person name="Faulkner G."/>
            <person name="Fletcher C.F."/>
            <person name="Fukushima T."/>
            <person name="Furuno M."/>
            <person name="Futaki S."/>
            <person name="Gariboldi M."/>
            <person name="Georgii-Hemming P."/>
            <person name="Gingeras T.R."/>
            <person name="Gojobori T."/>
            <person name="Green R.E."/>
            <person name="Gustincich S."/>
            <person name="Harbers M."/>
            <person name="Hayashi Y."/>
            <person name="Hensch T.K."/>
            <person name="Hirokawa N."/>
            <person name="Hill D."/>
            <person name="Huminiecki L."/>
            <person name="Iacono M."/>
            <person name="Ikeo K."/>
            <person name="Iwama A."/>
            <person name="Ishikawa T."/>
            <person name="Jakt M."/>
            <person name="Kanapin A."/>
            <person name="Katoh M."/>
            <person name="Kawasawa Y."/>
            <person name="Kelso J."/>
            <person name="Kitamura H."/>
            <person name="Kitano H."/>
            <person name="Kollias G."/>
            <person name="Krishnan S.P."/>
            <person name="Kruger A."/>
            <person name="Kummerfeld S.K."/>
            <person name="Kurochkin I.V."/>
            <person name="Lareau L.F."/>
            <person name="Lazarevic D."/>
            <person name="Lipovich L."/>
            <person name="Liu J."/>
            <person name="Liuni S."/>
            <person name="McWilliam S."/>
            <person name="Madan Babu M."/>
            <person name="Madera M."/>
            <person name="Marchionni L."/>
            <person name="Matsuda H."/>
            <person name="Matsuzawa S."/>
            <person name="Miki H."/>
            <person name="Mignone F."/>
            <person name="Miyake S."/>
            <person name="Morris K."/>
            <person name="Mottagui-Tabar S."/>
            <person name="Mulder N."/>
            <person name="Nakano N."/>
            <person name="Nakauchi H."/>
            <person name="Ng P."/>
            <person name="Nilsson R."/>
            <person name="Nishiguchi S."/>
            <person name="Nishikawa S."/>
            <person name="Nori F."/>
            <person name="Ohara O."/>
            <person name="Okazaki Y."/>
            <person name="Orlando V."/>
            <person name="Pang K.C."/>
            <person name="Pavan W.J."/>
            <person name="Pavesi G."/>
            <person name="Pesole G."/>
            <person name="Petrovsky N."/>
            <person name="Piazza S."/>
            <person name="Reed J."/>
            <person name="Reid J.F."/>
            <person name="Ring B.Z."/>
            <person name="Ringwald M."/>
            <person name="Rost B."/>
            <person name="Ruan Y."/>
            <person name="Salzberg S.L."/>
            <person name="Sandelin A."/>
            <person name="Schneider C."/>
            <person name="Schoenbach C."/>
            <person name="Sekiguchi K."/>
            <person name="Semple C.A."/>
            <person name="Seno S."/>
            <person name="Sessa L."/>
            <person name="Sheng Y."/>
            <person name="Shibata Y."/>
            <person name="Shimada H."/>
            <person name="Shimada K."/>
            <person name="Silva D."/>
            <person name="Sinclair B."/>
            <person name="Sperling S."/>
            <person name="Stupka E."/>
            <person name="Sugiura K."/>
            <person name="Sultana R."/>
            <person name="Takenaka Y."/>
            <person name="Taki K."/>
            <person name="Tammoja K."/>
            <person name="Tan S.L."/>
            <person name="Tang S."/>
            <person name="Taylor M.S."/>
            <person name="Tegner J."/>
            <person name="Teichmann S.A."/>
            <person name="Ueda H.R."/>
            <person name="van Nimwegen E."/>
            <person name="Verardo R."/>
            <person name="Wei C.L."/>
            <person name="Yagi K."/>
            <person name="Yamanishi H."/>
            <person name="Zabarovsky E."/>
            <person name="Zhu S."/>
            <person name="Zimmer A."/>
            <person name="Hide W."/>
            <person name="Bult C."/>
            <person name="Grimmond S.M."/>
            <person name="Teasdale R.D."/>
            <person name="Liu E.T."/>
            <person name="Brusic V."/>
            <person name="Quackenbush J."/>
            <person name="Wahlestedt C."/>
            <person name="Mattick J.S."/>
            <person name="Hume D.A."/>
            <person name="Kai C."/>
            <person name="Sasaki D."/>
            <person name="Tomaru Y."/>
            <person name="Fukuda S."/>
            <person name="Kanamori-Katayama M."/>
            <person name="Suzuki M."/>
            <person name="Aoki J."/>
            <person name="Arakawa T."/>
            <person name="Iida J."/>
            <person name="Imamura K."/>
            <person name="Itoh M."/>
            <person name="Kato T."/>
            <person name="Kawaji H."/>
            <person name="Kawagashira N."/>
            <person name="Kawashima T."/>
            <person name="Kojima M."/>
            <person name="Kondo S."/>
            <person name="Konno H."/>
            <person name="Nakano K."/>
            <person name="Ninomiya N."/>
            <person name="Nishio T."/>
            <person name="Okada M."/>
            <person name="Plessy C."/>
            <person name="Shibata K."/>
            <person name="Shiraki T."/>
            <person name="Suzuki S."/>
            <person name="Tagami M."/>
            <person name="Waki K."/>
            <person name="Watahiki A."/>
            <person name="Okamura-Oho Y."/>
            <person name="Suzuki H."/>
            <person name="Kawai J."/>
            <person name="Hayashizaki Y."/>
        </authorList>
    </citation>
    <scope>NUCLEOTIDE SEQUENCE [LARGE SCALE MRNA] OF 1-506</scope>
    <source>
        <tissue evidence="19">Mammary gland</tissue>
    </source>
</reference>
<reference evidence="16 18" key="3">
    <citation type="submission" date="2005-02" db="EMBL/GenBank/DDBJ databases">
        <title>Prediction of the coding sequences of mouse homologues of KIAA gene. The complete nucleotide sequences of mouse KIAA-homologous cDNAs identified by screening of terminal sequences of cDNA clones randomly sampled from size-fractionated libraries.</title>
        <authorList>
            <person name="Okazaki N."/>
            <person name="Kikuno R.F."/>
            <person name="Ohara R."/>
            <person name="Inamoto S."/>
            <person name="Nagase T."/>
            <person name="Ohara O."/>
            <person name="Koga H."/>
        </authorList>
    </citation>
    <scope>NUCLEOTIDE SEQUENCE [LARGE SCALE MRNA] OF 412-1029</scope>
    <source>
        <tissue evidence="18">Embryonic tail</tissue>
    </source>
</reference>
<reference evidence="16" key="4">
    <citation type="journal article" date="1997" name="Nat. Genet.">
        <title>HIP1, a human homologue of S. cerevisiae Sla2p, interacts with membrane-associated huntingtin in the brain.</title>
        <authorList>
            <person name="Kalchman M.A."/>
            <person name="Koide H.B."/>
            <person name="McCutcheon K."/>
            <person name="Graham R.K."/>
            <person name="Nichol K."/>
            <person name="Nishiyama K."/>
            <person name="Kazemi-Esfarjani P."/>
            <person name="Lynn F.C."/>
            <person name="Wellington C."/>
            <person name="Metzler M."/>
            <person name="Goldberg Y.P."/>
            <person name="Kanazawa I."/>
            <person name="Geitz R.D."/>
            <person name="Hayden M.R."/>
        </authorList>
    </citation>
    <scope>TISSUE SPECIFICITY</scope>
</reference>
<reference evidence="16" key="5">
    <citation type="journal article" date="2001" name="J. Biol. Chem.">
        <title>Clathrin- and AP-2-binding sites in HIP1 uncover a general assembly role for endocytic accessory proteins.</title>
        <authorList>
            <person name="Mishra S.K."/>
            <person name="Agostinelli N.R."/>
            <person name="Brett T.J."/>
            <person name="Mizukami I."/>
            <person name="Ross T.S."/>
            <person name="Traub L.M."/>
        </authorList>
    </citation>
    <scope>FUNCTION</scope>
</reference>
<reference evidence="16" key="6">
    <citation type="journal article" date="2001" name="Mol. Cell. Biol.">
        <title>Huntingtin interacting protein 1 is a clathrin coat binding protein required for differentiation of late spermatogenic progenitors.</title>
        <authorList>
            <person name="Rao D.S."/>
            <person name="Chang J.C."/>
            <person name="Kumar P.D."/>
            <person name="Mizukami I."/>
            <person name="Smithson G.M."/>
            <person name="Bradley S.V."/>
            <person name="Parlow A.F."/>
            <person name="Ross T.S."/>
        </authorList>
    </citation>
    <scope>FUNCTION</scope>
    <scope>TISSUE SPECIFICITY</scope>
    <scope>DISRUPTION PHENOTYPE</scope>
</reference>
<reference evidence="16" key="7">
    <citation type="journal article" date="2003" name="EMBO J.">
        <title>Disruption of the endocytic protein HIP1 results in neurological deficits and decreased AMPA receptor trafficking.</title>
        <authorList>
            <person name="Metzler M."/>
            <person name="Li B."/>
            <person name="Gan L."/>
            <person name="Georgiou J."/>
            <person name="Gutekunst C.A."/>
            <person name="Wang Y."/>
            <person name="Torre E."/>
            <person name="Devon R.S."/>
            <person name="Oh R."/>
            <person name="Legendre-Guillemin V."/>
            <person name="Rich M."/>
            <person name="Alvarez C."/>
            <person name="Gertsenstein M."/>
            <person name="McPherson P.S."/>
            <person name="Nagy A."/>
            <person name="Wang Y.T."/>
            <person name="Roder J.C."/>
            <person name="Raymond L.A."/>
            <person name="Hayden M.R."/>
        </authorList>
    </citation>
    <scope>FUNCTION</scope>
    <scope>INTERACTION WITH GRIA1</scope>
    <scope>TISSUE SPECIFICITY</scope>
    <scope>DISRUPTION PHENOTYPE</scope>
</reference>
<reference evidence="16" key="8">
    <citation type="journal article" date="2004" name="Hum. Mol. Genet.">
        <title>Huntingtin interacting protein 1 mutations lead to abnormal hematopoiesis, spinal defects and cataracts.</title>
        <authorList>
            <person name="Oravecz-Wilson K.I."/>
            <person name="Kiel M.J."/>
            <person name="Li L."/>
            <person name="Rao D.S."/>
            <person name="Saint-Dic D."/>
            <person name="Kumar P.D."/>
            <person name="Provot M.M."/>
            <person name="Hankenson K.D."/>
            <person name="Reddy V.N."/>
            <person name="Lieberman A.P."/>
            <person name="Morrison S.J."/>
            <person name="Ross T.S."/>
        </authorList>
    </citation>
    <scope>FUNCTION</scope>
    <scope>TISSUE SPECIFICITY</scope>
    <scope>DISRUPTION PHENOTYPE</scope>
</reference>
<reference evidence="16" key="9">
    <citation type="journal article" date="2007" name="Hum. Mol. Genet.">
        <title>Degenerative phenotypes caused by the combined deficiency of murine HIP1 and HIP1r are rescued by human HIP1.</title>
        <authorList>
            <person name="Bradley S.V."/>
            <person name="Hyun T.S."/>
            <person name="Oravecz-Wilson K.I."/>
            <person name="Li L."/>
            <person name="Waldorff E.I."/>
            <person name="Ermilov A.N."/>
            <person name="Goldstein S.A."/>
            <person name="Zhang C.X."/>
            <person name="Drubin D.G."/>
            <person name="Varela K."/>
            <person name="Parlow A."/>
            <person name="Dlugosz A.A."/>
            <person name="Ross T.S."/>
        </authorList>
    </citation>
    <scope>DISRUPTION PHENOTYPE</scope>
</reference>
<reference evidence="16" key="10">
    <citation type="journal article" date="2007" name="J. Neurosci.">
        <title>NMDA receptor function and NMDA receptor-dependent phosphorylation of huntingtin is altered by the endocytic protein HIP1.</title>
        <authorList>
            <person name="Metzler M."/>
            <person name="Gan L."/>
            <person name="Wong T.P."/>
            <person name="Liu L."/>
            <person name="Helm J."/>
            <person name="Liu L."/>
            <person name="Georgiou J."/>
            <person name="Wang Y."/>
            <person name="Bissada N."/>
            <person name="Cheng K."/>
            <person name="Roder J.C."/>
            <person name="Wang Y.T."/>
            <person name="Hayden M.R."/>
        </authorList>
    </citation>
    <scope>FUNCTION</scope>
    <scope>INTERACTION WITH GRIN2A AND GRIN2B</scope>
</reference>
<reference key="11">
    <citation type="journal article" date="2007" name="J. Neurosci.">
        <title>Huntingtin-interacting protein 1 influences worm and mouse presynaptic function and protects Caenorhabditis elegans neurons against mutant polyglutamine toxicity.</title>
        <authorList>
            <person name="Parker J.A."/>
            <person name="Metzler M."/>
            <person name="Georgiou J."/>
            <person name="Mage M."/>
            <person name="Roder J.C."/>
            <person name="Rose A.M."/>
            <person name="Hayden M.R."/>
            <person name="Neri C."/>
        </authorList>
    </citation>
    <scope>FUNCTION</scope>
    <scope>DISRUPTION PHENOTYPE</scope>
</reference>
<reference key="12">
    <citation type="journal article" date="2007" name="Mol. Reprod. Dev.">
        <title>Structural abnormalities in spermatids together with reduced sperm counts and motility underlie the reproductive defect in HIP1-/-mice.</title>
        <authorList>
            <person name="Khatchadourian K."/>
            <person name="Smith C.E."/>
            <person name="Metzler M."/>
            <person name="Gregory M."/>
            <person name="Hayden M.R."/>
            <person name="Cyr D.G."/>
            <person name="Hermo L."/>
        </authorList>
    </citation>
    <scope>FUNCTION</scope>
    <scope>TISSUE SPECIFICITY</scope>
    <scope>DISRUPTION PHENOTYPE</scope>
</reference>
<reference key="13">
    <citation type="journal article" date="2010" name="Cell">
        <title>A tissue-specific atlas of mouse protein phosphorylation and expression.</title>
        <authorList>
            <person name="Huttlin E.L."/>
            <person name="Jedrychowski M.P."/>
            <person name="Elias J.E."/>
            <person name="Goswami T."/>
            <person name="Rad R."/>
            <person name="Beausoleil S.A."/>
            <person name="Villen J."/>
            <person name="Haas W."/>
            <person name="Sowa M.E."/>
            <person name="Gygi S.P."/>
        </authorList>
    </citation>
    <scope>IDENTIFICATION BY MASS SPECTROMETRY [LARGE SCALE ANALYSIS]</scope>
    <source>
        <tissue>Brain</tissue>
        <tissue>Brown adipose tissue</tissue>
        <tissue>Heart</tissue>
        <tissue>Lung</tissue>
        <tissue>Spleen</tissue>
        <tissue>Testis</tissue>
    </source>
</reference>
<dbReference type="EMBL" id="BC017516">
    <property type="protein sequence ID" value="AAH17516.1"/>
    <property type="status" value="ALT_INIT"/>
    <property type="molecule type" value="mRNA"/>
</dbReference>
<dbReference type="EMBL" id="AK166346">
    <property type="protein sequence ID" value="BAE38720.1"/>
    <property type="molecule type" value="mRNA"/>
</dbReference>
<dbReference type="EMBL" id="AK220182">
    <property type="protein sequence ID" value="BAD90367.1"/>
    <property type="molecule type" value="mRNA"/>
</dbReference>
<dbReference type="CCDS" id="CCDS51663.1"/>
<dbReference type="RefSeq" id="NP_666113.2">
    <property type="nucleotide sequence ID" value="NM_146001.2"/>
</dbReference>
<dbReference type="RefSeq" id="XP_011239180.1">
    <property type="nucleotide sequence ID" value="XM_011240878.4"/>
</dbReference>
<dbReference type="SMR" id="Q8VD75"/>
<dbReference type="BioGRID" id="229599">
    <property type="interactions" value="5"/>
</dbReference>
<dbReference type="FunCoup" id="Q8VD75">
    <property type="interactions" value="1761"/>
</dbReference>
<dbReference type="STRING" id="10090.ENSMUSP00000059033"/>
<dbReference type="iPTMnet" id="Q8VD75"/>
<dbReference type="PhosphoSitePlus" id="Q8VD75"/>
<dbReference type="SwissPalm" id="Q8VD75"/>
<dbReference type="PaxDb" id="10090-ENSMUSP00000059033"/>
<dbReference type="PeptideAtlas" id="Q8VD75"/>
<dbReference type="ProteomicsDB" id="273345"/>
<dbReference type="Pumba" id="Q8VD75"/>
<dbReference type="Antibodypedia" id="2857">
    <property type="antibodies" value="287 antibodies from 35 providers"/>
</dbReference>
<dbReference type="DNASU" id="215114"/>
<dbReference type="Ensembl" id="ENSMUST00000060311.12">
    <property type="protein sequence ID" value="ENSMUSP00000059033.9"/>
    <property type="gene ID" value="ENSMUSG00000039959.14"/>
</dbReference>
<dbReference type="GeneID" id="215114"/>
<dbReference type="KEGG" id="mmu:215114"/>
<dbReference type="UCSC" id="uc008zyj.2">
    <property type="organism name" value="mouse"/>
</dbReference>
<dbReference type="AGR" id="MGI:1099804"/>
<dbReference type="CTD" id="3092"/>
<dbReference type="MGI" id="MGI:1099804">
    <property type="gene designation" value="Hip1"/>
</dbReference>
<dbReference type="VEuPathDB" id="HostDB:ENSMUSG00000039959"/>
<dbReference type="eggNOG" id="KOG0980">
    <property type="taxonomic scope" value="Eukaryota"/>
</dbReference>
<dbReference type="GeneTree" id="ENSGT00940000153594"/>
<dbReference type="HOGENOM" id="CLU_006034_0_0_1"/>
<dbReference type="InParanoid" id="Q8VD75"/>
<dbReference type="OMA" id="SSCTEQL"/>
<dbReference type="OrthoDB" id="8178130at2759"/>
<dbReference type="PhylomeDB" id="Q8VD75"/>
<dbReference type="TreeFam" id="TF316860"/>
<dbReference type="Reactome" id="R-MMU-8856828">
    <property type="pathway name" value="Clathrin-mediated endocytosis"/>
</dbReference>
<dbReference type="BioGRID-ORCS" id="215114">
    <property type="hits" value="1 hit in 80 CRISPR screens"/>
</dbReference>
<dbReference type="CD-CODE" id="CE726F99">
    <property type="entry name" value="Postsynaptic density"/>
</dbReference>
<dbReference type="ChiTaRS" id="Hip1">
    <property type="organism name" value="mouse"/>
</dbReference>
<dbReference type="PRO" id="PR:Q8VD75"/>
<dbReference type="Proteomes" id="UP000000589">
    <property type="component" value="Chromosome 5"/>
</dbReference>
<dbReference type="RNAct" id="Q8VD75">
    <property type="molecule type" value="protein"/>
</dbReference>
<dbReference type="Bgee" id="ENSMUSG00000039959">
    <property type="expression patterns" value="Expressed in humerus cartilage element and 237 other cell types or tissues"/>
</dbReference>
<dbReference type="ExpressionAtlas" id="Q8VD75">
    <property type="expression patterns" value="baseline and differential"/>
</dbReference>
<dbReference type="GO" id="GO:0030136">
    <property type="term" value="C:clathrin-coated vesicle"/>
    <property type="evidence" value="ECO:0000266"/>
    <property type="project" value="MGI"/>
</dbReference>
<dbReference type="GO" id="GO:0030665">
    <property type="term" value="C:clathrin-coated vesicle membrane"/>
    <property type="evidence" value="ECO:0007669"/>
    <property type="project" value="UniProtKB-SubCell"/>
</dbReference>
<dbReference type="GO" id="GO:0005737">
    <property type="term" value="C:cytoplasm"/>
    <property type="evidence" value="ECO:0000266"/>
    <property type="project" value="MGI"/>
</dbReference>
<dbReference type="GO" id="GO:0098978">
    <property type="term" value="C:glutamatergic synapse"/>
    <property type="evidence" value="ECO:0000314"/>
    <property type="project" value="SynGO"/>
</dbReference>
<dbReference type="GO" id="GO:0005794">
    <property type="term" value="C:Golgi apparatus"/>
    <property type="evidence" value="ECO:0000266"/>
    <property type="project" value="MGI"/>
</dbReference>
<dbReference type="GO" id="GO:0005634">
    <property type="term" value="C:nucleus"/>
    <property type="evidence" value="ECO:0007669"/>
    <property type="project" value="UniProtKB-SubCell"/>
</dbReference>
<dbReference type="GO" id="GO:0098793">
    <property type="term" value="C:presynapse"/>
    <property type="evidence" value="ECO:0007669"/>
    <property type="project" value="Ensembl"/>
</dbReference>
<dbReference type="GO" id="GO:0098685">
    <property type="term" value="C:Schaffer collateral - CA1 synapse"/>
    <property type="evidence" value="ECO:0000314"/>
    <property type="project" value="SynGO"/>
</dbReference>
<dbReference type="GO" id="GO:0051015">
    <property type="term" value="F:actin filament binding"/>
    <property type="evidence" value="ECO:0007669"/>
    <property type="project" value="Ensembl"/>
</dbReference>
<dbReference type="GO" id="GO:0035612">
    <property type="term" value="F:AP-2 adaptor complex binding"/>
    <property type="evidence" value="ECO:0007669"/>
    <property type="project" value="Ensembl"/>
</dbReference>
<dbReference type="GO" id="GO:0030276">
    <property type="term" value="F:clathrin binding"/>
    <property type="evidence" value="ECO:0000266"/>
    <property type="project" value="MGI"/>
</dbReference>
<dbReference type="GO" id="GO:0032051">
    <property type="term" value="F:clathrin light chain binding"/>
    <property type="evidence" value="ECO:0007669"/>
    <property type="project" value="Ensembl"/>
</dbReference>
<dbReference type="GO" id="GO:0035091">
    <property type="term" value="F:phosphatidylinositol binding"/>
    <property type="evidence" value="ECO:0000250"/>
    <property type="project" value="UniProtKB"/>
</dbReference>
<dbReference type="GO" id="GO:0043325">
    <property type="term" value="F:phosphatidylinositol-3,4-bisphosphate binding"/>
    <property type="evidence" value="ECO:0007669"/>
    <property type="project" value="Ensembl"/>
</dbReference>
<dbReference type="GO" id="GO:0080025">
    <property type="term" value="F:phosphatidylinositol-3,5-bisphosphate binding"/>
    <property type="evidence" value="ECO:0007669"/>
    <property type="project" value="Ensembl"/>
</dbReference>
<dbReference type="GO" id="GO:0032266">
    <property type="term" value="F:phosphatidylinositol-3-phosphate binding"/>
    <property type="evidence" value="ECO:0007669"/>
    <property type="project" value="Ensembl"/>
</dbReference>
<dbReference type="GO" id="GO:0046982">
    <property type="term" value="F:protein heterodimerization activity"/>
    <property type="evidence" value="ECO:0007669"/>
    <property type="project" value="Ensembl"/>
</dbReference>
<dbReference type="GO" id="GO:0042803">
    <property type="term" value="F:protein homodimerization activity"/>
    <property type="evidence" value="ECO:0007669"/>
    <property type="project" value="Ensembl"/>
</dbReference>
<dbReference type="GO" id="GO:0006915">
    <property type="term" value="P:apoptotic process"/>
    <property type="evidence" value="ECO:0000266"/>
    <property type="project" value="MGI"/>
</dbReference>
<dbReference type="GO" id="GO:0097190">
    <property type="term" value="P:apoptotic signaling pathway"/>
    <property type="evidence" value="ECO:0007669"/>
    <property type="project" value="Ensembl"/>
</dbReference>
<dbReference type="GO" id="GO:0030154">
    <property type="term" value="P:cell differentiation"/>
    <property type="evidence" value="ECO:0007669"/>
    <property type="project" value="UniProtKB-KW"/>
</dbReference>
<dbReference type="GO" id="GO:0048268">
    <property type="term" value="P:clathrin coat assembly"/>
    <property type="evidence" value="ECO:0000266"/>
    <property type="project" value="MGI"/>
</dbReference>
<dbReference type="GO" id="GO:0006897">
    <property type="term" value="P:endocytosis"/>
    <property type="evidence" value="ECO:0000314"/>
    <property type="project" value="UniProtKB"/>
</dbReference>
<dbReference type="GO" id="GO:0045742">
    <property type="term" value="P:positive regulation of epidermal growth factor receptor signaling pathway"/>
    <property type="evidence" value="ECO:0007669"/>
    <property type="project" value="Ensembl"/>
</dbReference>
<dbReference type="GO" id="GO:2000588">
    <property type="term" value="P:positive regulation of platelet-derived growth factor receptor-beta signaling pathway"/>
    <property type="evidence" value="ECO:0007669"/>
    <property type="project" value="Ensembl"/>
</dbReference>
<dbReference type="GO" id="GO:0048260">
    <property type="term" value="P:positive regulation of receptor-mediated endocytosis"/>
    <property type="evidence" value="ECO:0000315"/>
    <property type="project" value="UniProtKB"/>
</dbReference>
<dbReference type="GO" id="GO:0099171">
    <property type="term" value="P:presynaptic modulation of chemical synaptic transmission"/>
    <property type="evidence" value="ECO:0000314"/>
    <property type="project" value="SynGO"/>
</dbReference>
<dbReference type="GO" id="GO:0050821">
    <property type="term" value="P:protein stabilization"/>
    <property type="evidence" value="ECO:0007669"/>
    <property type="project" value="Ensembl"/>
</dbReference>
<dbReference type="GO" id="GO:0042981">
    <property type="term" value="P:regulation of apoptotic process"/>
    <property type="evidence" value="ECO:0000266"/>
    <property type="project" value="MGI"/>
</dbReference>
<dbReference type="GO" id="GO:0099149">
    <property type="term" value="P:regulation of postsynaptic neurotransmitter receptor internalization"/>
    <property type="evidence" value="ECO:0000314"/>
    <property type="project" value="SynGO"/>
</dbReference>
<dbReference type="CDD" id="cd17013">
    <property type="entry name" value="ANTH_N_HIP1"/>
    <property type="match status" value="1"/>
</dbReference>
<dbReference type="FunFam" id="1.20.1410.10:FF:000002">
    <property type="entry name" value="Huntingtin interacting protein 1"/>
    <property type="match status" value="1"/>
</dbReference>
<dbReference type="FunFam" id="1.20.5.1700:FF:000002">
    <property type="entry name" value="Huntingtin interacting protein 1"/>
    <property type="match status" value="1"/>
</dbReference>
<dbReference type="FunFam" id="1.25.40.90:FF:000022">
    <property type="entry name" value="huntingtin-interacting protein 1 isoform X1"/>
    <property type="match status" value="1"/>
</dbReference>
<dbReference type="Gene3D" id="1.20.5.1700">
    <property type="match status" value="1"/>
</dbReference>
<dbReference type="Gene3D" id="1.25.40.90">
    <property type="match status" value="1"/>
</dbReference>
<dbReference type="Gene3D" id="6.10.250.920">
    <property type="match status" value="1"/>
</dbReference>
<dbReference type="Gene3D" id="1.20.1410.10">
    <property type="entry name" value="I/LWEQ domain"/>
    <property type="match status" value="1"/>
</dbReference>
<dbReference type="InterPro" id="IPR011417">
    <property type="entry name" value="ANTH_dom"/>
</dbReference>
<dbReference type="InterPro" id="IPR013809">
    <property type="entry name" value="ENTH"/>
</dbReference>
<dbReference type="InterPro" id="IPR008942">
    <property type="entry name" value="ENTH_VHS"/>
</dbReference>
<dbReference type="InterPro" id="IPR032422">
    <property type="entry name" value="HIP1_clath-bd"/>
</dbReference>
<dbReference type="InterPro" id="IPR035964">
    <property type="entry name" value="I/LWEQ_dom_sf"/>
</dbReference>
<dbReference type="InterPro" id="IPR002558">
    <property type="entry name" value="ILWEQ_dom"/>
</dbReference>
<dbReference type="InterPro" id="IPR030224">
    <property type="entry name" value="Sla2_fam"/>
</dbReference>
<dbReference type="PANTHER" id="PTHR10407">
    <property type="entry name" value="HUNTINGTIN INTERACTING PROTEIN 1"/>
    <property type="match status" value="1"/>
</dbReference>
<dbReference type="PANTHER" id="PTHR10407:SF14">
    <property type="entry name" value="HUNTINGTIN-INTERACTING PROTEIN 1"/>
    <property type="match status" value="1"/>
</dbReference>
<dbReference type="Pfam" id="PF07651">
    <property type="entry name" value="ANTH"/>
    <property type="match status" value="1"/>
</dbReference>
<dbReference type="Pfam" id="PF16515">
    <property type="entry name" value="HIP1_clath_bdg"/>
    <property type="match status" value="1"/>
</dbReference>
<dbReference type="Pfam" id="PF01608">
    <property type="entry name" value="I_LWEQ"/>
    <property type="match status" value="1"/>
</dbReference>
<dbReference type="SMART" id="SM00273">
    <property type="entry name" value="ENTH"/>
    <property type="match status" value="1"/>
</dbReference>
<dbReference type="SMART" id="SM00307">
    <property type="entry name" value="ILWEQ"/>
    <property type="match status" value="1"/>
</dbReference>
<dbReference type="SUPFAM" id="SSF48464">
    <property type="entry name" value="ENTH/VHS domain"/>
    <property type="match status" value="1"/>
</dbReference>
<dbReference type="SUPFAM" id="SSF109885">
    <property type="entry name" value="I/LWEQ domain"/>
    <property type="match status" value="1"/>
</dbReference>
<dbReference type="PROSITE" id="PS50942">
    <property type="entry name" value="ENTH"/>
    <property type="match status" value="1"/>
</dbReference>
<dbReference type="PROSITE" id="PS50945">
    <property type="entry name" value="I_LWEQ"/>
    <property type="match status" value="1"/>
</dbReference>